<name>LCTP_HALH5</name>
<proteinExistence type="inferred from homology"/>
<feature type="chain" id="PRO_0000210372" description="L-lactate permease">
    <location>
        <begin position="1"/>
        <end position="524"/>
    </location>
</feature>
<feature type="transmembrane region" description="Helical" evidence="1">
    <location>
        <begin position="12"/>
        <end position="34"/>
    </location>
</feature>
<feature type="transmembrane region" description="Helical" evidence="1">
    <location>
        <begin position="38"/>
        <end position="60"/>
    </location>
</feature>
<feature type="transmembrane region" description="Helical" evidence="1">
    <location>
        <begin position="67"/>
        <end position="89"/>
    </location>
</feature>
<feature type="transmembrane region" description="Helical" evidence="1">
    <location>
        <begin position="127"/>
        <end position="149"/>
    </location>
</feature>
<feature type="transmembrane region" description="Helical" evidence="1">
    <location>
        <begin position="156"/>
        <end position="178"/>
    </location>
</feature>
<feature type="transmembrane region" description="Helical" evidence="1">
    <location>
        <begin position="193"/>
        <end position="215"/>
    </location>
</feature>
<feature type="transmembrane region" description="Helical" evidence="1">
    <location>
        <begin position="224"/>
        <end position="246"/>
    </location>
</feature>
<feature type="transmembrane region" description="Helical" evidence="1">
    <location>
        <begin position="250"/>
        <end position="267"/>
    </location>
</feature>
<feature type="transmembrane region" description="Helical" evidence="1">
    <location>
        <begin position="297"/>
        <end position="319"/>
    </location>
</feature>
<feature type="transmembrane region" description="Helical" evidence="1">
    <location>
        <begin position="339"/>
        <end position="361"/>
    </location>
</feature>
<feature type="transmembrane region" description="Helical" evidence="1">
    <location>
        <begin position="374"/>
        <end position="396"/>
    </location>
</feature>
<feature type="transmembrane region" description="Helical" evidence="1">
    <location>
        <begin position="411"/>
        <end position="433"/>
    </location>
</feature>
<feature type="transmembrane region" description="Helical" evidence="1">
    <location>
        <begin position="505"/>
        <end position="522"/>
    </location>
</feature>
<gene>
    <name type="primary">lctP</name>
    <name type="ordered locus">BH3936</name>
</gene>
<protein>
    <recommendedName>
        <fullName>L-lactate permease</fullName>
    </recommendedName>
</protein>
<dbReference type="EMBL" id="BA000004">
    <property type="protein sequence ID" value="BAB07655.1"/>
    <property type="molecule type" value="Genomic_DNA"/>
</dbReference>
<dbReference type="PIR" id="H84141">
    <property type="entry name" value="H84141"/>
</dbReference>
<dbReference type="RefSeq" id="WP_010900061.1">
    <property type="nucleotide sequence ID" value="NC_002570.2"/>
</dbReference>
<dbReference type="STRING" id="272558.gene:10729849"/>
<dbReference type="KEGG" id="bha:BH3936"/>
<dbReference type="eggNOG" id="COG1620">
    <property type="taxonomic scope" value="Bacteria"/>
</dbReference>
<dbReference type="HOGENOM" id="CLU_021628_0_0_9"/>
<dbReference type="OrthoDB" id="9761056at2"/>
<dbReference type="Proteomes" id="UP000001258">
    <property type="component" value="Chromosome"/>
</dbReference>
<dbReference type="GO" id="GO:0005886">
    <property type="term" value="C:plasma membrane"/>
    <property type="evidence" value="ECO:0007669"/>
    <property type="project" value="UniProtKB-SubCell"/>
</dbReference>
<dbReference type="GO" id="GO:0015129">
    <property type="term" value="F:lactate transmembrane transporter activity"/>
    <property type="evidence" value="ECO:0007669"/>
    <property type="project" value="InterPro"/>
</dbReference>
<dbReference type="GO" id="GO:0015295">
    <property type="term" value="F:solute:proton symporter activity"/>
    <property type="evidence" value="ECO:0007669"/>
    <property type="project" value="TreeGrafter"/>
</dbReference>
<dbReference type="InterPro" id="IPR003804">
    <property type="entry name" value="Lactate_perm"/>
</dbReference>
<dbReference type="NCBIfam" id="TIGR00795">
    <property type="entry name" value="lctP"/>
    <property type="match status" value="1"/>
</dbReference>
<dbReference type="PANTHER" id="PTHR30003">
    <property type="entry name" value="L-LACTATE PERMEASE"/>
    <property type="match status" value="1"/>
</dbReference>
<dbReference type="PANTHER" id="PTHR30003:SF5">
    <property type="entry name" value="L-LACTATE PERMEASE"/>
    <property type="match status" value="1"/>
</dbReference>
<dbReference type="Pfam" id="PF02652">
    <property type="entry name" value="Lactate_perm"/>
    <property type="match status" value="1"/>
</dbReference>
<comment type="function">
    <text>May play a role in L-lactate transport.</text>
</comment>
<comment type="subcellular location">
    <subcellularLocation>
        <location evidence="2">Cell membrane</location>
        <topology evidence="2">Multi-pass membrane protein</topology>
    </subcellularLocation>
</comment>
<comment type="similarity">
    <text evidence="2">Belongs to the lactate permease family.</text>
</comment>
<evidence type="ECO:0000255" key="1"/>
<evidence type="ECO:0000305" key="2"/>
<reference key="1">
    <citation type="journal article" date="2000" name="Nucleic Acids Res.">
        <title>Complete genome sequence of the alkaliphilic bacterium Bacillus halodurans and genomic sequence comparison with Bacillus subtilis.</title>
        <authorList>
            <person name="Takami H."/>
            <person name="Nakasone K."/>
            <person name="Takaki Y."/>
            <person name="Maeno G."/>
            <person name="Sasaki R."/>
            <person name="Masui N."/>
            <person name="Fuji F."/>
            <person name="Hirama C."/>
            <person name="Nakamura Y."/>
            <person name="Ogasawara N."/>
            <person name="Kuhara S."/>
            <person name="Horikoshi K."/>
        </authorList>
    </citation>
    <scope>NUCLEOTIDE SEQUENCE [LARGE SCALE GENOMIC DNA]</scope>
    <source>
        <strain>ATCC BAA-125 / DSM 18197 / FERM 7344 / JCM 9153 / C-125</strain>
    </source>
</reference>
<sequence length="524" mass="55629">MLVETYDPFQHLAVSAFVAAIPILLLLLCLTVFKMQGIQAALLTLLVTFFIAGLVFHLPFGESIGSIVQGVVQGLWPIGYIIVMAVWLYKIAVASGKFAVLRGSIIGISRDQRIQLLLIGFCFNAFLEGAAGFGVPIAICAVLLVSLGFKPLQAAMLCLIANGASGAFGAIGIPVGIIDTLGLEGQVTSMDVSMMTALTLPMINFTIPFLLIWLMDSWKGIKEILPAILVTSSVYTVSQALITIFIGPELADIIPSLLTMGLLALFLKRWQPRNTFLLNGNGCESEHASLKDVIKAWSPFYLLTMFVFLWSLPAFKGLLAEGGALEFAKWAFVVPGSSIEVGVDFIGATGTAILLAAVTTVTTTKMIRMKESISLLKKVIVDFSIPIMMICAIIGIAKLMTYGGLTMALGEAVATTGAFFPFLSPILGWIGVFMTGSVVNNNTLFAPIQTTAGAIIGTNPSLLVAANTAGGVMAKLVSPQSIAIATAAVGETGNEAALTKMTLKYSFGLLVFVSVWTYILSLLF</sequence>
<accession>Q9K5Z9</accession>
<keyword id="KW-1003">Cell membrane</keyword>
<keyword id="KW-0472">Membrane</keyword>
<keyword id="KW-1185">Reference proteome</keyword>
<keyword id="KW-0812">Transmembrane</keyword>
<keyword id="KW-1133">Transmembrane helix</keyword>
<keyword id="KW-0813">Transport</keyword>
<organism>
    <name type="scientific">Halalkalibacterium halodurans (strain ATCC BAA-125 / DSM 18197 / FERM 7344 / JCM 9153 / C-125)</name>
    <name type="common">Bacillus halodurans</name>
    <dbReference type="NCBI Taxonomy" id="272558"/>
    <lineage>
        <taxon>Bacteria</taxon>
        <taxon>Bacillati</taxon>
        <taxon>Bacillota</taxon>
        <taxon>Bacilli</taxon>
        <taxon>Bacillales</taxon>
        <taxon>Bacillaceae</taxon>
        <taxon>Halalkalibacterium (ex Joshi et al. 2022)</taxon>
    </lineage>
</organism>